<keyword id="KW-1185">Reference proteome</keyword>
<keyword id="KW-0687">Ribonucleoprotein</keyword>
<keyword id="KW-0689">Ribosomal protein</keyword>
<keyword id="KW-0694">RNA-binding</keyword>
<keyword id="KW-0699">rRNA-binding</keyword>
<proteinExistence type="inferred from homology"/>
<sequence>MSRVAKYPVKLPSGVEVKLEANKLTVKGGQGTLSMTVHSDVTIGQEEGQLTFNPSESAKSWAMVGTTRALVQNIVTGVSEGFTKSLEINGVGYRAQASGNTLNLTLGFSHPVEYKLPEGVTAETPKNTTIVLKSADKQQLGQVAAEIRAFRPPEPYKGKGIRYGDEEVRRKEAKKK</sequence>
<protein>
    <recommendedName>
        <fullName evidence="1">Large ribosomal subunit protein uL6</fullName>
    </recommendedName>
    <alternativeName>
        <fullName evidence="3">50S ribosomal protein L6</fullName>
    </alternativeName>
</protein>
<dbReference type="EMBL" id="CP000285">
    <property type="protein sequence ID" value="ABE57798.1"/>
    <property type="molecule type" value="Genomic_DNA"/>
</dbReference>
<dbReference type="RefSeq" id="WP_011505744.1">
    <property type="nucleotide sequence ID" value="NC_007963.1"/>
</dbReference>
<dbReference type="SMR" id="Q1R0G0"/>
<dbReference type="STRING" id="290398.Csal_0436"/>
<dbReference type="GeneID" id="95333189"/>
<dbReference type="KEGG" id="csa:Csal_0436"/>
<dbReference type="eggNOG" id="COG0097">
    <property type="taxonomic scope" value="Bacteria"/>
</dbReference>
<dbReference type="HOGENOM" id="CLU_065464_1_2_6"/>
<dbReference type="OrthoDB" id="9805007at2"/>
<dbReference type="Proteomes" id="UP000000239">
    <property type="component" value="Chromosome"/>
</dbReference>
<dbReference type="GO" id="GO:0022625">
    <property type="term" value="C:cytosolic large ribosomal subunit"/>
    <property type="evidence" value="ECO:0007669"/>
    <property type="project" value="TreeGrafter"/>
</dbReference>
<dbReference type="GO" id="GO:0019843">
    <property type="term" value="F:rRNA binding"/>
    <property type="evidence" value="ECO:0007669"/>
    <property type="project" value="UniProtKB-UniRule"/>
</dbReference>
<dbReference type="GO" id="GO:0003735">
    <property type="term" value="F:structural constituent of ribosome"/>
    <property type="evidence" value="ECO:0007669"/>
    <property type="project" value="InterPro"/>
</dbReference>
<dbReference type="GO" id="GO:0002181">
    <property type="term" value="P:cytoplasmic translation"/>
    <property type="evidence" value="ECO:0007669"/>
    <property type="project" value="TreeGrafter"/>
</dbReference>
<dbReference type="FunFam" id="3.90.930.12:FF:000001">
    <property type="entry name" value="50S ribosomal protein L6"/>
    <property type="match status" value="1"/>
</dbReference>
<dbReference type="FunFam" id="3.90.930.12:FF:000002">
    <property type="entry name" value="50S ribosomal protein L6"/>
    <property type="match status" value="1"/>
</dbReference>
<dbReference type="Gene3D" id="3.90.930.12">
    <property type="entry name" value="Ribosomal protein L6, alpha-beta domain"/>
    <property type="match status" value="2"/>
</dbReference>
<dbReference type="HAMAP" id="MF_01365_B">
    <property type="entry name" value="Ribosomal_uL6_B"/>
    <property type="match status" value="1"/>
</dbReference>
<dbReference type="InterPro" id="IPR000702">
    <property type="entry name" value="Ribosomal_uL6-like"/>
</dbReference>
<dbReference type="InterPro" id="IPR036789">
    <property type="entry name" value="Ribosomal_uL6-like_a/b-dom_sf"/>
</dbReference>
<dbReference type="InterPro" id="IPR020040">
    <property type="entry name" value="Ribosomal_uL6_a/b-dom"/>
</dbReference>
<dbReference type="InterPro" id="IPR019906">
    <property type="entry name" value="Ribosomal_uL6_bac-type"/>
</dbReference>
<dbReference type="InterPro" id="IPR002358">
    <property type="entry name" value="Ribosomal_uL6_CS"/>
</dbReference>
<dbReference type="NCBIfam" id="TIGR03654">
    <property type="entry name" value="L6_bact"/>
    <property type="match status" value="1"/>
</dbReference>
<dbReference type="PANTHER" id="PTHR11655">
    <property type="entry name" value="60S/50S RIBOSOMAL PROTEIN L6/L9"/>
    <property type="match status" value="1"/>
</dbReference>
<dbReference type="PANTHER" id="PTHR11655:SF14">
    <property type="entry name" value="LARGE RIBOSOMAL SUBUNIT PROTEIN UL6M"/>
    <property type="match status" value="1"/>
</dbReference>
<dbReference type="Pfam" id="PF00347">
    <property type="entry name" value="Ribosomal_L6"/>
    <property type="match status" value="2"/>
</dbReference>
<dbReference type="PIRSF" id="PIRSF002162">
    <property type="entry name" value="Ribosomal_L6"/>
    <property type="match status" value="1"/>
</dbReference>
<dbReference type="PRINTS" id="PR00059">
    <property type="entry name" value="RIBOSOMALL6"/>
</dbReference>
<dbReference type="SUPFAM" id="SSF56053">
    <property type="entry name" value="Ribosomal protein L6"/>
    <property type="match status" value="2"/>
</dbReference>
<dbReference type="PROSITE" id="PS00525">
    <property type="entry name" value="RIBOSOMAL_L6_1"/>
    <property type="match status" value="1"/>
</dbReference>
<comment type="function">
    <text evidence="1">This protein binds to the 23S rRNA, and is important in its secondary structure. It is located near the subunit interface in the base of the L7/L12 stalk, and near the tRNA binding site of the peptidyltransferase center.</text>
</comment>
<comment type="subunit">
    <text evidence="1">Part of the 50S ribosomal subunit.</text>
</comment>
<comment type="similarity">
    <text evidence="1">Belongs to the universal ribosomal protein uL6 family.</text>
</comment>
<evidence type="ECO:0000255" key="1">
    <source>
        <dbReference type="HAMAP-Rule" id="MF_01365"/>
    </source>
</evidence>
<evidence type="ECO:0000256" key="2">
    <source>
        <dbReference type="SAM" id="MobiDB-lite"/>
    </source>
</evidence>
<evidence type="ECO:0000305" key="3"/>
<gene>
    <name evidence="1" type="primary">rplF</name>
    <name type="ordered locus">Csal_0436</name>
</gene>
<organism>
    <name type="scientific">Chromohalobacter salexigens (strain ATCC BAA-138 / DSM 3043 / CIP 106854 / NCIMB 13768 / 1H11)</name>
    <dbReference type="NCBI Taxonomy" id="290398"/>
    <lineage>
        <taxon>Bacteria</taxon>
        <taxon>Pseudomonadati</taxon>
        <taxon>Pseudomonadota</taxon>
        <taxon>Gammaproteobacteria</taxon>
        <taxon>Oceanospirillales</taxon>
        <taxon>Halomonadaceae</taxon>
        <taxon>Chromohalobacter</taxon>
    </lineage>
</organism>
<reference key="1">
    <citation type="journal article" date="2011" name="Stand. Genomic Sci.">
        <title>Complete genome sequence of the halophilic and highly halotolerant Chromohalobacter salexigens type strain (1H11(T)).</title>
        <authorList>
            <person name="Copeland A."/>
            <person name="O'Connor K."/>
            <person name="Lucas S."/>
            <person name="Lapidus A."/>
            <person name="Berry K.W."/>
            <person name="Detter J.C."/>
            <person name="Del Rio T.G."/>
            <person name="Hammon N."/>
            <person name="Dalin E."/>
            <person name="Tice H."/>
            <person name="Pitluck S."/>
            <person name="Bruce D."/>
            <person name="Goodwin L."/>
            <person name="Han C."/>
            <person name="Tapia R."/>
            <person name="Saunders E."/>
            <person name="Schmutz J."/>
            <person name="Brettin T."/>
            <person name="Larimer F."/>
            <person name="Land M."/>
            <person name="Hauser L."/>
            <person name="Vargas C."/>
            <person name="Nieto J.J."/>
            <person name="Kyrpides N.C."/>
            <person name="Ivanova N."/>
            <person name="Goker M."/>
            <person name="Klenk H.P."/>
            <person name="Csonka L.N."/>
            <person name="Woyke T."/>
        </authorList>
    </citation>
    <scope>NUCLEOTIDE SEQUENCE [LARGE SCALE GENOMIC DNA]</scope>
    <source>
        <strain>ATCC BAA-138 / DSM 3043 / CIP 106854 / NCIMB 13768 / 1H11</strain>
    </source>
</reference>
<feature type="chain" id="PRO_0000265245" description="Large ribosomal subunit protein uL6">
    <location>
        <begin position="1"/>
        <end position="176"/>
    </location>
</feature>
<feature type="region of interest" description="Disordered" evidence="2">
    <location>
        <begin position="153"/>
        <end position="176"/>
    </location>
</feature>
<feature type="compositionally biased region" description="Basic and acidic residues" evidence="2">
    <location>
        <begin position="153"/>
        <end position="170"/>
    </location>
</feature>
<accession>Q1R0G0</accession>
<name>RL6_CHRSD</name>